<accession>C0RJC7</accession>
<gene>
    <name evidence="1" type="primary">frr</name>
    <name type="ordered locus">BMEA_A1202</name>
</gene>
<keyword id="KW-0963">Cytoplasm</keyword>
<keyword id="KW-0648">Protein biosynthesis</keyword>
<organism>
    <name type="scientific">Brucella melitensis biotype 2 (strain ATCC 23457)</name>
    <dbReference type="NCBI Taxonomy" id="546272"/>
    <lineage>
        <taxon>Bacteria</taxon>
        <taxon>Pseudomonadati</taxon>
        <taxon>Pseudomonadota</taxon>
        <taxon>Alphaproteobacteria</taxon>
        <taxon>Hyphomicrobiales</taxon>
        <taxon>Brucellaceae</taxon>
        <taxon>Brucella/Ochrobactrum group</taxon>
        <taxon>Brucella</taxon>
    </lineage>
</organism>
<reference key="1">
    <citation type="submission" date="2009-03" db="EMBL/GenBank/DDBJ databases">
        <title>Brucella melitensis ATCC 23457 whole genome shotgun sequencing project.</title>
        <authorList>
            <person name="Setubal J.C."/>
            <person name="Boyle S."/>
            <person name="Crasta O.R."/>
            <person name="Gillespie J.J."/>
            <person name="Kenyon R.W."/>
            <person name="Lu J."/>
            <person name="Mane S."/>
            <person name="Nagrani S."/>
            <person name="Shallom J.M."/>
            <person name="Shallom S."/>
            <person name="Shukla M."/>
            <person name="Snyder E.E."/>
            <person name="Sobral B.W."/>
            <person name="Wattam A.R."/>
            <person name="Will R."/>
            <person name="Williams K."/>
            <person name="Yoo H."/>
            <person name="Munk C."/>
            <person name="Tapia R."/>
            <person name="Han C."/>
            <person name="Detter J.C."/>
            <person name="Bruce D."/>
            <person name="Brettin T.S."/>
        </authorList>
    </citation>
    <scope>NUCLEOTIDE SEQUENCE [LARGE SCALE GENOMIC DNA]</scope>
    <source>
        <strain>ATCC 23457</strain>
    </source>
</reference>
<proteinExistence type="inferred from homology"/>
<name>RRF_BRUMB</name>
<dbReference type="EMBL" id="CP001488">
    <property type="protein sequence ID" value="ACO00935.1"/>
    <property type="molecule type" value="Genomic_DNA"/>
</dbReference>
<dbReference type="RefSeq" id="WP_004683873.1">
    <property type="nucleotide sequence ID" value="NC_012441.1"/>
</dbReference>
<dbReference type="SMR" id="C0RJC7"/>
<dbReference type="GeneID" id="29593640"/>
<dbReference type="KEGG" id="bmi:BMEA_A1202"/>
<dbReference type="HOGENOM" id="CLU_073981_2_0_5"/>
<dbReference type="Proteomes" id="UP000001748">
    <property type="component" value="Chromosome I"/>
</dbReference>
<dbReference type="GO" id="GO:0005829">
    <property type="term" value="C:cytosol"/>
    <property type="evidence" value="ECO:0007669"/>
    <property type="project" value="GOC"/>
</dbReference>
<dbReference type="GO" id="GO:0043023">
    <property type="term" value="F:ribosomal large subunit binding"/>
    <property type="evidence" value="ECO:0007669"/>
    <property type="project" value="TreeGrafter"/>
</dbReference>
<dbReference type="GO" id="GO:0002184">
    <property type="term" value="P:cytoplasmic translational termination"/>
    <property type="evidence" value="ECO:0007669"/>
    <property type="project" value="TreeGrafter"/>
</dbReference>
<dbReference type="CDD" id="cd00520">
    <property type="entry name" value="RRF"/>
    <property type="match status" value="1"/>
</dbReference>
<dbReference type="FunFam" id="1.10.132.20:FF:000001">
    <property type="entry name" value="Ribosome-recycling factor"/>
    <property type="match status" value="1"/>
</dbReference>
<dbReference type="FunFam" id="3.30.1360.40:FF:000001">
    <property type="entry name" value="Ribosome-recycling factor"/>
    <property type="match status" value="1"/>
</dbReference>
<dbReference type="Gene3D" id="3.30.1360.40">
    <property type="match status" value="1"/>
</dbReference>
<dbReference type="Gene3D" id="1.10.132.20">
    <property type="entry name" value="Ribosome-recycling factor"/>
    <property type="match status" value="1"/>
</dbReference>
<dbReference type="HAMAP" id="MF_00040">
    <property type="entry name" value="RRF"/>
    <property type="match status" value="1"/>
</dbReference>
<dbReference type="InterPro" id="IPR002661">
    <property type="entry name" value="Ribosome_recyc_fac"/>
</dbReference>
<dbReference type="InterPro" id="IPR023584">
    <property type="entry name" value="Ribosome_recyc_fac_dom"/>
</dbReference>
<dbReference type="InterPro" id="IPR036191">
    <property type="entry name" value="RRF_sf"/>
</dbReference>
<dbReference type="NCBIfam" id="TIGR00496">
    <property type="entry name" value="frr"/>
    <property type="match status" value="1"/>
</dbReference>
<dbReference type="PANTHER" id="PTHR20982:SF3">
    <property type="entry name" value="MITOCHONDRIAL RIBOSOME RECYCLING FACTOR PSEUDO 1"/>
    <property type="match status" value="1"/>
</dbReference>
<dbReference type="PANTHER" id="PTHR20982">
    <property type="entry name" value="RIBOSOME RECYCLING FACTOR"/>
    <property type="match status" value="1"/>
</dbReference>
<dbReference type="Pfam" id="PF01765">
    <property type="entry name" value="RRF"/>
    <property type="match status" value="1"/>
</dbReference>
<dbReference type="SUPFAM" id="SSF55194">
    <property type="entry name" value="Ribosome recycling factor, RRF"/>
    <property type="match status" value="1"/>
</dbReference>
<evidence type="ECO:0000255" key="1">
    <source>
        <dbReference type="HAMAP-Rule" id="MF_00040"/>
    </source>
</evidence>
<protein>
    <recommendedName>
        <fullName evidence="1">Ribosome-recycling factor</fullName>
        <shortName evidence="1">RRF</shortName>
    </recommendedName>
    <alternativeName>
        <fullName evidence="1">Ribosome-releasing factor</fullName>
    </alternativeName>
</protein>
<comment type="function">
    <text evidence="1">Responsible for the release of ribosomes from messenger RNA at the termination of protein biosynthesis. May increase the efficiency of translation by recycling ribosomes from one round of translation to another.</text>
</comment>
<comment type="subcellular location">
    <subcellularLocation>
        <location evidence="1">Cytoplasm</location>
    </subcellularLocation>
</comment>
<comment type="similarity">
    <text evidence="1">Belongs to the RRF family.</text>
</comment>
<sequence length="186" mass="20723">MSDAFDINDLKRRMEGAVNALKHDLGGLRTGRASASLLEPITIEAYGSTMPINQVANISVPESRMLSVSVWDKSMVGAVERAIRDSGLGLNPITDGMTLRIRLPELNEQRRKELVKIAHQYAEQGRIAARHVRRDGMDQLKKLEKDSVISQDESRVLSEKVQKLTDDTIAEMDKIVAVKEGEIMQV</sequence>
<feature type="chain" id="PRO_1000194905" description="Ribosome-recycling factor">
    <location>
        <begin position="1"/>
        <end position="186"/>
    </location>
</feature>